<name>PAT11_SOLTU</name>
<accession>Q2MY40</accession>
<comment type="function">
    <text evidence="1">Probable lipolytic acyl hydrolase (LAH), an activity which is thought to be involved in the response of tubers to pathogens.</text>
</comment>
<comment type="subcellular location">
    <subcellularLocation>
        <location evidence="1">Vacuole</location>
    </subcellularLocation>
</comment>
<comment type="tissue specificity">
    <text evidence="4">Tuber.</text>
</comment>
<comment type="developmental stage">
    <text evidence="4">Accumulates progressively during tuber formation from stolon.</text>
</comment>
<comment type="domain">
    <text>The nitrogen atoms of the two glycine residues in the GGXR motif define the oxyanion hole, and stabilize the oxyanion that forms during the nucleophilic attack by the catalytic serine during substrate cleavage.</text>
</comment>
<comment type="miscellaneous">
    <text>Patatin have a dual role as a somatic storage protein and as an enzyme involved in host resistance.</text>
</comment>
<comment type="similarity">
    <text evidence="5">Belongs to the patatin family.</text>
</comment>
<organism>
    <name type="scientific">Solanum tuberosum</name>
    <name type="common">Potato</name>
    <dbReference type="NCBI Taxonomy" id="4113"/>
    <lineage>
        <taxon>Eukaryota</taxon>
        <taxon>Viridiplantae</taxon>
        <taxon>Streptophyta</taxon>
        <taxon>Embryophyta</taxon>
        <taxon>Tracheophyta</taxon>
        <taxon>Spermatophyta</taxon>
        <taxon>Magnoliopsida</taxon>
        <taxon>eudicotyledons</taxon>
        <taxon>Gunneridae</taxon>
        <taxon>Pentapetalae</taxon>
        <taxon>asterids</taxon>
        <taxon>lamiids</taxon>
        <taxon>Solanales</taxon>
        <taxon>Solanaceae</taxon>
        <taxon>Solanoideae</taxon>
        <taxon>Solaneae</taxon>
        <taxon>Solanum</taxon>
    </lineage>
</organism>
<keyword id="KW-0175">Coiled coil</keyword>
<keyword id="KW-0325">Glycoprotein</keyword>
<keyword id="KW-0378">Hydrolase</keyword>
<keyword id="KW-0442">Lipid degradation</keyword>
<keyword id="KW-0443">Lipid metabolism</keyword>
<keyword id="KW-0611">Plant defense</keyword>
<keyword id="KW-1185">Reference proteome</keyword>
<keyword id="KW-0732">Signal</keyword>
<keyword id="KW-0758">Storage protein</keyword>
<keyword id="KW-0926">Vacuole</keyword>
<protein>
    <recommendedName>
        <fullName>Patatin-11</fullName>
        <ecNumber>3.1.1.-</ecNumber>
    </recommendedName>
</protein>
<reference key="1">
    <citation type="journal article" date="2006" name="Genetics">
        <title>Structural diversity and differential transcription of the patatin multicopy gene family during potato tuber development.</title>
        <authorList>
            <person name="Stupar R.M."/>
            <person name="Beaubien K.A."/>
            <person name="Jin W."/>
            <person name="Song J."/>
            <person name="Lee M.-K."/>
            <person name="Wu C."/>
            <person name="Zhang H.-B."/>
            <person name="Han B."/>
            <person name="Jiang J."/>
        </authorList>
    </citation>
    <scope>NUCLEOTIDE SEQUENCE [MRNA]</scope>
    <scope>DEVELOPMENTAL STAGE</scope>
    <scope>TISSUE SPECIFICITY</scope>
    <source>
        <strain>cv. Kennebec</strain>
    </source>
</reference>
<dbReference type="EC" id="3.1.1.-"/>
<dbReference type="EMBL" id="DQ274498">
    <property type="protein sequence ID" value="ABC55698.1"/>
    <property type="molecule type" value="mRNA"/>
</dbReference>
<dbReference type="SMR" id="Q2MY40"/>
<dbReference type="InParanoid" id="Q2MY40"/>
<dbReference type="Proteomes" id="UP000011115">
    <property type="component" value="Unassembled WGS sequence"/>
</dbReference>
<dbReference type="ExpressionAtlas" id="Q2MY40">
    <property type="expression patterns" value="baseline"/>
</dbReference>
<dbReference type="GO" id="GO:0005773">
    <property type="term" value="C:vacuole"/>
    <property type="evidence" value="ECO:0007669"/>
    <property type="project" value="UniProtKB-SubCell"/>
</dbReference>
<dbReference type="GO" id="GO:0047372">
    <property type="term" value="F:monoacylglycerol lipase activity"/>
    <property type="evidence" value="ECO:0000318"/>
    <property type="project" value="GO_Central"/>
</dbReference>
<dbReference type="GO" id="GO:0045735">
    <property type="term" value="F:nutrient reservoir activity"/>
    <property type="evidence" value="ECO:0007669"/>
    <property type="project" value="UniProtKB-KW"/>
</dbReference>
<dbReference type="GO" id="GO:0004620">
    <property type="term" value="F:phospholipase activity"/>
    <property type="evidence" value="ECO:0000318"/>
    <property type="project" value="GO_Central"/>
</dbReference>
<dbReference type="GO" id="GO:0006952">
    <property type="term" value="P:defense response"/>
    <property type="evidence" value="ECO:0007669"/>
    <property type="project" value="UniProtKB-KW"/>
</dbReference>
<dbReference type="GO" id="GO:0016042">
    <property type="term" value="P:lipid catabolic process"/>
    <property type="evidence" value="ECO:0007669"/>
    <property type="project" value="UniProtKB-KW"/>
</dbReference>
<dbReference type="Gene3D" id="3.40.1090.10">
    <property type="entry name" value="Cytosolic phospholipase A2 catalytic domain"/>
    <property type="match status" value="1"/>
</dbReference>
<dbReference type="InterPro" id="IPR016035">
    <property type="entry name" value="Acyl_Trfase/lysoPLipase"/>
</dbReference>
<dbReference type="InterPro" id="IPR002641">
    <property type="entry name" value="PNPLA_dom"/>
</dbReference>
<dbReference type="PANTHER" id="PTHR32176:SF85">
    <property type="entry name" value="PATATIN GROUP D-2"/>
    <property type="match status" value="1"/>
</dbReference>
<dbReference type="PANTHER" id="PTHR32176">
    <property type="entry name" value="XYLOSE ISOMERASE"/>
    <property type="match status" value="1"/>
</dbReference>
<dbReference type="Pfam" id="PF01734">
    <property type="entry name" value="Patatin"/>
    <property type="match status" value="1"/>
</dbReference>
<dbReference type="SUPFAM" id="SSF52151">
    <property type="entry name" value="FabD/lysophospholipase-like"/>
    <property type="match status" value="1"/>
</dbReference>
<dbReference type="PROSITE" id="PS51635">
    <property type="entry name" value="PNPLA"/>
    <property type="match status" value="1"/>
</dbReference>
<feature type="signal peptide" evidence="2">
    <location>
        <begin position="1"/>
        <end position="23"/>
    </location>
</feature>
<feature type="chain" id="PRO_0000296696" description="Patatin-11">
    <location>
        <begin position="24"/>
        <end position="387"/>
    </location>
</feature>
<feature type="domain" description="PNPLA" evidence="3">
    <location>
        <begin position="32"/>
        <end position="230"/>
    </location>
</feature>
<feature type="coiled-coil region" evidence="2">
    <location>
        <begin position="322"/>
        <end position="385"/>
    </location>
</feature>
<feature type="short sequence motif" description="GXGXXG" evidence="3">
    <location>
        <begin position="36"/>
        <end position="41"/>
    </location>
</feature>
<feature type="short sequence motif" description="GXSXG" evidence="3">
    <location>
        <begin position="75"/>
        <end position="79"/>
    </location>
</feature>
<feature type="short sequence motif" description="DGA/G" evidence="3">
    <location>
        <begin position="216"/>
        <end position="218"/>
    </location>
</feature>
<feature type="active site" description="Nucleophile" evidence="3">
    <location>
        <position position="77"/>
    </location>
</feature>
<feature type="active site" description="Proton acceptor" evidence="3">
    <location>
        <position position="216"/>
    </location>
</feature>
<feature type="glycosylation site" description="N-linked (GlcNAc...) asparagine" evidence="2">
    <location>
        <position position="115"/>
    </location>
</feature>
<feature type="glycosylation site" description="N-linked (GlcNAc...) asparagine" evidence="2">
    <location>
        <position position="326"/>
    </location>
</feature>
<evidence type="ECO:0000250" key="1"/>
<evidence type="ECO:0000255" key="2"/>
<evidence type="ECO:0000255" key="3">
    <source>
        <dbReference type="PROSITE-ProRule" id="PRU01161"/>
    </source>
</evidence>
<evidence type="ECO:0000269" key="4">
    <source>
    </source>
</evidence>
<evidence type="ECO:0000305" key="5"/>
<proteinExistence type="evidence at transcript level"/>
<sequence length="387" mass="42498">MATTKSVLVLIFMILATTSSTFATLGEMVTVLSTDGGGIKGIIPGIIPEFLEGQLQKMDNNADARLADYFDVIGGTSTGGLLTAMITTPNENNRPFAAAKDIVPFYFQHGPHIFNSSTGQFFGPKYDGKYLMQVLQEKLGETRVHQALTEVAISSFDIKTNKPVIFTKSNLAKSPELDAKMYDICYSTAAAPIYFPPHHFVTHTSNGATYEFNLVDGGVATVGDPALLSLSVATRLAQEDPAFSSIKSLDYKQMLLLSLGTGTNSEFDKTYTAEEAAKWGPLRWMLAIQQMTNAASSYMTDYYISTVFQARHSQNNYLRVQENALNGTTTEMDDASEANMELLVQVGETLLKKPVSKDSPETYEEALKRFAKLLSDRKKLRANKASY</sequence>